<name>PSBX_PARMW</name>
<comment type="function">
    <text evidence="1">Involved in the binding and/or turnover of quinones at the Q(B) site of photosystem II (PSII). PSII is a light-driven water plastoquinone oxidoreductase, using light energy to abstract electrons from H(2)O, generating a proton gradient subsequently used for ATP formation.</text>
</comment>
<comment type="subunit">
    <text evidence="1">PSII is composed of 1 copy each of membrane proteins PsbA, PsbB, PsbC, PsbD, PsbE, PsbF, PsbH, PsbI, PsbJ, PsbK, PsbL, PsbM, PsbT, PsbX, PsbY, PsbZ, Psb30/Ycf12, peripheral proteins PsbO, CyanoQ (PsbQ), PsbU, PsbV and a large number of cofactors. It forms dimeric complexes.</text>
</comment>
<comment type="subcellular location">
    <subcellularLocation>
        <location evidence="1">Cellular thylakoid membrane</location>
        <topology evidence="1">Single-pass membrane protein</topology>
    </subcellularLocation>
</comment>
<comment type="similarity">
    <text evidence="1">Belongs to the PsbX family. Type 1 subfamily.</text>
</comment>
<feature type="chain" id="PRO_1000145155" description="Photosystem II reaction center protein X">
    <location>
        <begin position="1"/>
        <end position="40"/>
    </location>
</feature>
<feature type="transmembrane region" description="Helical" evidence="1">
    <location>
        <begin position="10"/>
        <end position="30"/>
    </location>
</feature>
<proteinExistence type="inferred from homology"/>
<accession>Q7U9C4</accession>
<keyword id="KW-0472">Membrane</keyword>
<keyword id="KW-0602">Photosynthesis</keyword>
<keyword id="KW-0604">Photosystem II</keyword>
<keyword id="KW-0793">Thylakoid</keyword>
<keyword id="KW-0812">Transmembrane</keyword>
<keyword id="KW-1133">Transmembrane helix</keyword>
<sequence length="40" mass="4325">MTPSLSNFLSSLVWGGLIVVVPATIGLILISQTDRLDRKL</sequence>
<gene>
    <name evidence="1" type="primary">psbX</name>
    <name type="ordered locus">SYNW0334</name>
</gene>
<organism>
    <name type="scientific">Parasynechococcus marenigrum (strain WH8102)</name>
    <dbReference type="NCBI Taxonomy" id="84588"/>
    <lineage>
        <taxon>Bacteria</taxon>
        <taxon>Bacillati</taxon>
        <taxon>Cyanobacteriota</taxon>
        <taxon>Cyanophyceae</taxon>
        <taxon>Synechococcales</taxon>
        <taxon>Prochlorococcaceae</taxon>
        <taxon>Parasynechococcus</taxon>
        <taxon>Parasynechococcus marenigrum</taxon>
    </lineage>
</organism>
<evidence type="ECO:0000255" key="1">
    <source>
        <dbReference type="HAMAP-Rule" id="MF_01386"/>
    </source>
</evidence>
<dbReference type="EMBL" id="BX569689">
    <property type="protein sequence ID" value="CAE06849.1"/>
    <property type="molecule type" value="Genomic_DNA"/>
</dbReference>
<dbReference type="RefSeq" id="WP_011127208.1">
    <property type="nucleotide sequence ID" value="NC_005070.1"/>
</dbReference>
<dbReference type="SMR" id="Q7U9C4"/>
<dbReference type="STRING" id="84588.SYNW0334"/>
<dbReference type="KEGG" id="syw:SYNW0334"/>
<dbReference type="eggNOG" id="ENOG502ZJI0">
    <property type="taxonomic scope" value="Bacteria"/>
</dbReference>
<dbReference type="HOGENOM" id="CLU_212837_1_0_3"/>
<dbReference type="BioCyc" id="MetaCyc:TX72_RS01685-MONOMER"/>
<dbReference type="Proteomes" id="UP000001422">
    <property type="component" value="Chromosome"/>
</dbReference>
<dbReference type="GO" id="GO:0009523">
    <property type="term" value="C:photosystem II"/>
    <property type="evidence" value="ECO:0007669"/>
    <property type="project" value="UniProtKB-KW"/>
</dbReference>
<dbReference type="GO" id="GO:0031676">
    <property type="term" value="C:plasma membrane-derived thylakoid membrane"/>
    <property type="evidence" value="ECO:0007669"/>
    <property type="project" value="UniProtKB-SubCell"/>
</dbReference>
<dbReference type="GO" id="GO:0015979">
    <property type="term" value="P:photosynthesis"/>
    <property type="evidence" value="ECO:0007669"/>
    <property type="project" value="UniProtKB-UniRule"/>
</dbReference>
<dbReference type="Gene3D" id="1.20.5.510">
    <property type="entry name" value="Single helix bin"/>
    <property type="match status" value="1"/>
</dbReference>
<dbReference type="HAMAP" id="MF_01386">
    <property type="entry name" value="PSII_PsbX_1"/>
    <property type="match status" value="1"/>
</dbReference>
<dbReference type="InterPro" id="IPR009518">
    <property type="entry name" value="PSII_PsbX"/>
</dbReference>
<dbReference type="InterPro" id="IPR023431">
    <property type="entry name" value="PSII_PsbX_type_1_subfam"/>
</dbReference>
<dbReference type="Pfam" id="PF06596">
    <property type="entry name" value="PsbX"/>
    <property type="match status" value="1"/>
</dbReference>
<reference key="1">
    <citation type="journal article" date="2003" name="Nature">
        <title>The genome of a motile marine Synechococcus.</title>
        <authorList>
            <person name="Palenik B."/>
            <person name="Brahamsha B."/>
            <person name="Larimer F.W."/>
            <person name="Land M.L."/>
            <person name="Hauser L."/>
            <person name="Chain P."/>
            <person name="Lamerdin J.E."/>
            <person name="Regala W."/>
            <person name="Allen E.E."/>
            <person name="McCarren J."/>
            <person name="Paulsen I.T."/>
            <person name="Dufresne A."/>
            <person name="Partensky F."/>
            <person name="Webb E.A."/>
            <person name="Waterbury J."/>
        </authorList>
    </citation>
    <scope>NUCLEOTIDE SEQUENCE [LARGE SCALE GENOMIC DNA]</scope>
    <source>
        <strain>WH8102</strain>
    </source>
</reference>
<protein>
    <recommendedName>
        <fullName evidence="1">Photosystem II reaction center protein X</fullName>
    </recommendedName>
</protein>